<gene>
    <name evidence="1" type="primary">leuB</name>
    <name type="ordered locus">GOX0191</name>
</gene>
<proteinExistence type="inferred from homology"/>
<feature type="chain" id="PRO_0000083697" description="3-isopropylmalate dehydrogenase">
    <location>
        <begin position="1"/>
        <end position="369"/>
    </location>
</feature>
<feature type="binding site" evidence="1">
    <location>
        <position position="98"/>
    </location>
    <ligand>
        <name>substrate</name>
    </ligand>
</feature>
<feature type="binding site" evidence="1">
    <location>
        <position position="108"/>
    </location>
    <ligand>
        <name>substrate</name>
    </ligand>
</feature>
<feature type="binding site" evidence="1">
    <location>
        <position position="136"/>
    </location>
    <ligand>
        <name>substrate</name>
    </ligand>
</feature>
<feature type="binding site" evidence="1">
    <location>
        <position position="227"/>
    </location>
    <ligand>
        <name>Mg(2+)</name>
        <dbReference type="ChEBI" id="CHEBI:18420"/>
    </ligand>
</feature>
<feature type="binding site" evidence="1">
    <location>
        <position position="227"/>
    </location>
    <ligand>
        <name>substrate</name>
    </ligand>
</feature>
<feature type="binding site" evidence="1">
    <location>
        <position position="251"/>
    </location>
    <ligand>
        <name>Mg(2+)</name>
        <dbReference type="ChEBI" id="CHEBI:18420"/>
    </ligand>
</feature>
<feature type="binding site" evidence="1">
    <location>
        <position position="255"/>
    </location>
    <ligand>
        <name>Mg(2+)</name>
        <dbReference type="ChEBI" id="CHEBI:18420"/>
    </ligand>
</feature>
<feature type="binding site" evidence="1">
    <location>
        <begin position="290"/>
        <end position="302"/>
    </location>
    <ligand>
        <name>NAD(+)</name>
        <dbReference type="ChEBI" id="CHEBI:57540"/>
    </ligand>
</feature>
<feature type="site" description="Important for catalysis" evidence="1">
    <location>
        <position position="143"/>
    </location>
</feature>
<feature type="site" description="Important for catalysis" evidence="1">
    <location>
        <position position="194"/>
    </location>
</feature>
<accession>Q5FUG5</accession>
<organism>
    <name type="scientific">Gluconobacter oxydans (strain 621H)</name>
    <name type="common">Gluconobacter suboxydans</name>
    <dbReference type="NCBI Taxonomy" id="290633"/>
    <lineage>
        <taxon>Bacteria</taxon>
        <taxon>Pseudomonadati</taxon>
        <taxon>Pseudomonadota</taxon>
        <taxon>Alphaproteobacteria</taxon>
        <taxon>Acetobacterales</taxon>
        <taxon>Acetobacteraceae</taxon>
        <taxon>Gluconobacter</taxon>
    </lineage>
</organism>
<keyword id="KW-0028">Amino-acid biosynthesis</keyword>
<keyword id="KW-0100">Branched-chain amino acid biosynthesis</keyword>
<keyword id="KW-0963">Cytoplasm</keyword>
<keyword id="KW-0432">Leucine biosynthesis</keyword>
<keyword id="KW-0460">Magnesium</keyword>
<keyword id="KW-0464">Manganese</keyword>
<keyword id="KW-0479">Metal-binding</keyword>
<keyword id="KW-0520">NAD</keyword>
<keyword id="KW-0560">Oxidoreductase</keyword>
<keyword id="KW-1185">Reference proteome</keyword>
<comment type="function">
    <text evidence="1">Catalyzes the oxidation of 3-carboxy-2-hydroxy-4-methylpentanoate (3-isopropylmalate) to 3-carboxy-4-methyl-2-oxopentanoate. The product decarboxylates to 4-methyl-2 oxopentanoate.</text>
</comment>
<comment type="catalytic activity">
    <reaction evidence="1">
        <text>(2R,3S)-3-isopropylmalate + NAD(+) = 4-methyl-2-oxopentanoate + CO2 + NADH</text>
        <dbReference type="Rhea" id="RHEA:32271"/>
        <dbReference type="ChEBI" id="CHEBI:16526"/>
        <dbReference type="ChEBI" id="CHEBI:17865"/>
        <dbReference type="ChEBI" id="CHEBI:35121"/>
        <dbReference type="ChEBI" id="CHEBI:57540"/>
        <dbReference type="ChEBI" id="CHEBI:57945"/>
        <dbReference type="EC" id="1.1.1.85"/>
    </reaction>
</comment>
<comment type="cofactor">
    <cofactor evidence="1">
        <name>Mg(2+)</name>
        <dbReference type="ChEBI" id="CHEBI:18420"/>
    </cofactor>
    <cofactor evidence="1">
        <name>Mn(2+)</name>
        <dbReference type="ChEBI" id="CHEBI:29035"/>
    </cofactor>
    <text evidence="1">Binds 1 Mg(2+) or Mn(2+) ion per subunit.</text>
</comment>
<comment type="pathway">
    <text evidence="1">Amino-acid biosynthesis; L-leucine biosynthesis; L-leucine from 3-methyl-2-oxobutanoate: step 3/4.</text>
</comment>
<comment type="subunit">
    <text evidence="1">Homodimer.</text>
</comment>
<comment type="subcellular location">
    <subcellularLocation>
        <location evidence="1">Cytoplasm</location>
    </subcellularLocation>
</comment>
<comment type="similarity">
    <text evidence="1">Belongs to the isocitrate and isopropylmalate dehydrogenases family. LeuB type 1 subfamily.</text>
</comment>
<sequence>MSDAYKLLVLAGDGIGPEVMREVARIVHWMSAHRGLKLEITEELVGAASLAVHGVPIRDEVIELARQSDAVLFGSVGDPAWSHVGFDKRPEVAILKLRKELELFANLRPAKLFDALIDASALKPEVVRGLDLMIVRETVGGIYFGEPRGIETLPDGSRRGINTEVYTTSEIERVARVAFDLARKRDNRVCSVEKCNVMESGLLWKEVVTDVHKREYPDVQLSHMLADNCAMQLVRDPNQFDVIVTGNLFGDILSDLASMLTGSLGMLPSATLGPVRADGKRNALYEPIHGSAPDIAGKGIANPLAQILSFAMLLRYSLNRAEDADLIEMAVSNVLASGLRTGDIMSPGMARVGTEMMGQAVLREMEKLA</sequence>
<dbReference type="EC" id="1.1.1.85" evidence="1"/>
<dbReference type="EMBL" id="CP000009">
    <property type="protein sequence ID" value="AAW59981.1"/>
    <property type="molecule type" value="Genomic_DNA"/>
</dbReference>
<dbReference type="RefSeq" id="WP_011251784.1">
    <property type="nucleotide sequence ID" value="NC_006677.1"/>
</dbReference>
<dbReference type="SMR" id="Q5FUG5"/>
<dbReference type="STRING" id="290633.GOX0191"/>
<dbReference type="KEGG" id="gox:GOX0191"/>
<dbReference type="eggNOG" id="COG0473">
    <property type="taxonomic scope" value="Bacteria"/>
</dbReference>
<dbReference type="HOGENOM" id="CLU_031953_0_3_5"/>
<dbReference type="UniPathway" id="UPA00048">
    <property type="reaction ID" value="UER00072"/>
</dbReference>
<dbReference type="Proteomes" id="UP000006375">
    <property type="component" value="Chromosome"/>
</dbReference>
<dbReference type="GO" id="GO:0005829">
    <property type="term" value="C:cytosol"/>
    <property type="evidence" value="ECO:0007669"/>
    <property type="project" value="TreeGrafter"/>
</dbReference>
<dbReference type="GO" id="GO:0003862">
    <property type="term" value="F:3-isopropylmalate dehydrogenase activity"/>
    <property type="evidence" value="ECO:0007669"/>
    <property type="project" value="UniProtKB-UniRule"/>
</dbReference>
<dbReference type="GO" id="GO:0000287">
    <property type="term" value="F:magnesium ion binding"/>
    <property type="evidence" value="ECO:0007669"/>
    <property type="project" value="InterPro"/>
</dbReference>
<dbReference type="GO" id="GO:0051287">
    <property type="term" value="F:NAD binding"/>
    <property type="evidence" value="ECO:0007669"/>
    <property type="project" value="InterPro"/>
</dbReference>
<dbReference type="GO" id="GO:0009098">
    <property type="term" value="P:L-leucine biosynthetic process"/>
    <property type="evidence" value="ECO:0007669"/>
    <property type="project" value="UniProtKB-UniRule"/>
</dbReference>
<dbReference type="FunFam" id="3.40.718.10:FF:000006">
    <property type="entry name" value="3-isopropylmalate dehydrogenase"/>
    <property type="match status" value="1"/>
</dbReference>
<dbReference type="Gene3D" id="3.40.718.10">
    <property type="entry name" value="Isopropylmalate Dehydrogenase"/>
    <property type="match status" value="1"/>
</dbReference>
<dbReference type="HAMAP" id="MF_01033">
    <property type="entry name" value="LeuB_type1"/>
    <property type="match status" value="1"/>
</dbReference>
<dbReference type="InterPro" id="IPR019818">
    <property type="entry name" value="IsoCit/isopropylmalate_DH_CS"/>
</dbReference>
<dbReference type="InterPro" id="IPR024084">
    <property type="entry name" value="IsoPropMal-DH-like_dom"/>
</dbReference>
<dbReference type="InterPro" id="IPR004429">
    <property type="entry name" value="Isopropylmalate_DH"/>
</dbReference>
<dbReference type="NCBIfam" id="TIGR00169">
    <property type="entry name" value="leuB"/>
    <property type="match status" value="1"/>
</dbReference>
<dbReference type="PANTHER" id="PTHR42979">
    <property type="entry name" value="3-ISOPROPYLMALATE DEHYDROGENASE"/>
    <property type="match status" value="1"/>
</dbReference>
<dbReference type="PANTHER" id="PTHR42979:SF1">
    <property type="entry name" value="3-ISOPROPYLMALATE DEHYDROGENASE"/>
    <property type="match status" value="1"/>
</dbReference>
<dbReference type="Pfam" id="PF00180">
    <property type="entry name" value="Iso_dh"/>
    <property type="match status" value="1"/>
</dbReference>
<dbReference type="SMART" id="SM01329">
    <property type="entry name" value="Iso_dh"/>
    <property type="match status" value="1"/>
</dbReference>
<dbReference type="SUPFAM" id="SSF53659">
    <property type="entry name" value="Isocitrate/Isopropylmalate dehydrogenase-like"/>
    <property type="match status" value="1"/>
</dbReference>
<dbReference type="PROSITE" id="PS00470">
    <property type="entry name" value="IDH_IMDH"/>
    <property type="match status" value="1"/>
</dbReference>
<name>LEU3_GLUOX</name>
<reference key="1">
    <citation type="journal article" date="2005" name="Nat. Biotechnol.">
        <title>Complete genome sequence of the acetic acid bacterium Gluconobacter oxydans.</title>
        <authorList>
            <person name="Prust C."/>
            <person name="Hoffmeister M."/>
            <person name="Liesegang H."/>
            <person name="Wiezer A."/>
            <person name="Fricke W.F."/>
            <person name="Ehrenreich A."/>
            <person name="Gottschalk G."/>
            <person name="Deppenmeier U."/>
        </authorList>
    </citation>
    <scope>NUCLEOTIDE SEQUENCE [LARGE SCALE GENOMIC DNA]</scope>
    <source>
        <strain>621H</strain>
    </source>
</reference>
<evidence type="ECO:0000255" key="1">
    <source>
        <dbReference type="HAMAP-Rule" id="MF_01033"/>
    </source>
</evidence>
<protein>
    <recommendedName>
        <fullName evidence="1">3-isopropylmalate dehydrogenase</fullName>
        <ecNumber evidence="1">1.1.1.85</ecNumber>
    </recommendedName>
    <alternativeName>
        <fullName evidence="1">3-IPM-DH</fullName>
    </alternativeName>
    <alternativeName>
        <fullName evidence="1">Beta-IPM dehydrogenase</fullName>
        <shortName evidence="1">IMDH</shortName>
    </alternativeName>
</protein>